<name>FLUC1_METBF</name>
<evidence type="ECO:0000255" key="1">
    <source>
        <dbReference type="HAMAP-Rule" id="MF_00454"/>
    </source>
</evidence>
<evidence type="ECO:0000305" key="2"/>
<proteinExistence type="inferred from homology"/>
<sequence>MGKLFLIGAGGFIGACLRYTVSSQVPRIKNIPAGTLTVNLLGTIVLAFLTFSSEPQSMVYLVNIGILGSFTTFSTFAYETFKLLEEGQNFSFFLNIFLNVALCLVGVSIAYLALSL</sequence>
<accession>Q46F67</accession>
<comment type="function">
    <text evidence="1">Fluoride-specific ion channel. Important for reducing fluoride concentration in the cell, thus reducing its toxicity.</text>
</comment>
<comment type="catalytic activity">
    <reaction evidence="1">
        <text>fluoride(in) = fluoride(out)</text>
        <dbReference type="Rhea" id="RHEA:76159"/>
        <dbReference type="ChEBI" id="CHEBI:17051"/>
    </reaction>
    <physiologicalReaction direction="left-to-right" evidence="1">
        <dbReference type="Rhea" id="RHEA:76160"/>
    </physiologicalReaction>
</comment>
<comment type="activity regulation">
    <text evidence="1">Na(+) is not transported, but it plays an essential structural role and its presence is essential for fluoride channel function.</text>
</comment>
<comment type="subcellular location">
    <subcellularLocation>
        <location evidence="1">Cell membrane</location>
        <topology evidence="1">Multi-pass membrane protein</topology>
    </subcellularLocation>
</comment>
<comment type="similarity">
    <text evidence="1">Belongs to the fluoride channel Fluc/FEX (TC 1.A.43) family.</text>
</comment>
<comment type="sequence caution" evidence="2">
    <conflict type="erroneous initiation">
        <sequence resource="EMBL-CDS" id="AAZ69475"/>
    </conflict>
</comment>
<protein>
    <recommendedName>
        <fullName evidence="1">Fluoride-specific ion channel FluC 1</fullName>
    </recommendedName>
</protein>
<keyword id="KW-1003">Cell membrane</keyword>
<keyword id="KW-0407">Ion channel</keyword>
<keyword id="KW-0406">Ion transport</keyword>
<keyword id="KW-0472">Membrane</keyword>
<keyword id="KW-0479">Metal-binding</keyword>
<keyword id="KW-0915">Sodium</keyword>
<keyword id="KW-0812">Transmembrane</keyword>
<keyword id="KW-1133">Transmembrane helix</keyword>
<keyword id="KW-0813">Transport</keyword>
<dbReference type="EMBL" id="CP000099">
    <property type="protein sequence ID" value="AAZ69475.1"/>
    <property type="status" value="ALT_INIT"/>
    <property type="molecule type" value="Genomic_DNA"/>
</dbReference>
<dbReference type="SMR" id="Q46F67"/>
<dbReference type="STRING" id="269797.Mbar_A0493"/>
<dbReference type="PaxDb" id="269797-Mbar_A0493"/>
<dbReference type="KEGG" id="mba:Mbar_A0493"/>
<dbReference type="eggNOG" id="arCOG04701">
    <property type="taxonomic scope" value="Archaea"/>
</dbReference>
<dbReference type="HOGENOM" id="CLU_114342_3_2_2"/>
<dbReference type="GO" id="GO:0005886">
    <property type="term" value="C:plasma membrane"/>
    <property type="evidence" value="ECO:0007669"/>
    <property type="project" value="UniProtKB-SubCell"/>
</dbReference>
<dbReference type="GO" id="GO:0062054">
    <property type="term" value="F:fluoride channel activity"/>
    <property type="evidence" value="ECO:0007669"/>
    <property type="project" value="UniProtKB-UniRule"/>
</dbReference>
<dbReference type="GO" id="GO:0046872">
    <property type="term" value="F:metal ion binding"/>
    <property type="evidence" value="ECO:0007669"/>
    <property type="project" value="UniProtKB-KW"/>
</dbReference>
<dbReference type="GO" id="GO:0140114">
    <property type="term" value="P:cellular detoxification of fluoride"/>
    <property type="evidence" value="ECO:0007669"/>
    <property type="project" value="UniProtKB-UniRule"/>
</dbReference>
<dbReference type="HAMAP" id="MF_00454">
    <property type="entry name" value="FluC"/>
    <property type="match status" value="1"/>
</dbReference>
<dbReference type="InterPro" id="IPR003691">
    <property type="entry name" value="FluC"/>
</dbReference>
<dbReference type="NCBIfam" id="TIGR00494">
    <property type="entry name" value="crcB"/>
    <property type="match status" value="1"/>
</dbReference>
<dbReference type="PANTHER" id="PTHR28259">
    <property type="entry name" value="FLUORIDE EXPORT PROTEIN 1-RELATED"/>
    <property type="match status" value="1"/>
</dbReference>
<dbReference type="PANTHER" id="PTHR28259:SF1">
    <property type="entry name" value="FLUORIDE EXPORT PROTEIN 1-RELATED"/>
    <property type="match status" value="1"/>
</dbReference>
<dbReference type="Pfam" id="PF02537">
    <property type="entry name" value="CRCB"/>
    <property type="match status" value="1"/>
</dbReference>
<feature type="chain" id="PRO_0000252962" description="Fluoride-specific ion channel FluC 1">
    <location>
        <begin position="1"/>
        <end position="116"/>
    </location>
</feature>
<feature type="transmembrane region" description="Helical" evidence="1">
    <location>
        <begin position="1"/>
        <end position="21"/>
    </location>
</feature>
<feature type="transmembrane region" description="Helical" evidence="1">
    <location>
        <begin position="31"/>
        <end position="51"/>
    </location>
</feature>
<feature type="transmembrane region" description="Helical" evidence="1">
    <location>
        <begin position="58"/>
        <end position="78"/>
    </location>
</feature>
<feature type="transmembrane region" description="Helical" evidence="1">
    <location>
        <begin position="92"/>
        <end position="112"/>
    </location>
</feature>
<feature type="binding site" evidence="1">
    <location>
        <position position="68"/>
    </location>
    <ligand>
        <name>Na(+)</name>
        <dbReference type="ChEBI" id="CHEBI:29101"/>
        <note>structural</note>
    </ligand>
</feature>
<feature type="binding site" evidence="1">
    <location>
        <position position="71"/>
    </location>
    <ligand>
        <name>Na(+)</name>
        <dbReference type="ChEBI" id="CHEBI:29101"/>
        <note>structural</note>
    </ligand>
</feature>
<organism>
    <name type="scientific">Methanosarcina barkeri (strain Fusaro / DSM 804)</name>
    <dbReference type="NCBI Taxonomy" id="269797"/>
    <lineage>
        <taxon>Archaea</taxon>
        <taxon>Methanobacteriati</taxon>
        <taxon>Methanobacteriota</taxon>
        <taxon>Stenosarchaea group</taxon>
        <taxon>Methanomicrobia</taxon>
        <taxon>Methanosarcinales</taxon>
        <taxon>Methanosarcinaceae</taxon>
        <taxon>Methanosarcina</taxon>
    </lineage>
</organism>
<reference key="1">
    <citation type="journal article" date="2006" name="J. Bacteriol.">
        <title>The Methanosarcina barkeri genome: comparative analysis with Methanosarcina acetivorans and Methanosarcina mazei reveals extensive rearrangement within methanosarcinal genomes.</title>
        <authorList>
            <person name="Maeder D.L."/>
            <person name="Anderson I."/>
            <person name="Brettin T.S."/>
            <person name="Bruce D.C."/>
            <person name="Gilna P."/>
            <person name="Han C.S."/>
            <person name="Lapidus A."/>
            <person name="Metcalf W.W."/>
            <person name="Saunders E."/>
            <person name="Tapia R."/>
            <person name="Sowers K.R."/>
        </authorList>
    </citation>
    <scope>NUCLEOTIDE SEQUENCE [LARGE SCALE GENOMIC DNA]</scope>
    <source>
        <strain>Fusaro / DSM 804</strain>
    </source>
</reference>
<gene>
    <name evidence="1" type="primary">fluC1</name>
    <name evidence="1" type="synonym">crcB1</name>
    <name type="ordered locus">Mbar_A0493</name>
</gene>